<comment type="subcellular location">
    <subcellularLocation>
        <location evidence="1">Secreted</location>
    </subcellularLocation>
</comment>
<comment type="similarity">
    <text evidence="2">Belongs to the peptidase S1B family.</text>
</comment>
<keyword id="KW-0378">Hydrolase</keyword>
<keyword id="KW-0645">Protease</keyword>
<keyword id="KW-0964">Secreted</keyword>
<keyword id="KW-0720">Serine protease</keyword>
<keyword id="KW-0732">Signal</keyword>
<gene>
    <name type="primary">splC</name>
    <name type="ordered locus">SAUSA300_1756</name>
</gene>
<reference key="1">
    <citation type="journal article" date="2006" name="Lancet">
        <title>Complete genome sequence of USA300, an epidemic clone of community-acquired meticillin-resistant Staphylococcus aureus.</title>
        <authorList>
            <person name="Diep B.A."/>
            <person name="Gill S.R."/>
            <person name="Chang R.F."/>
            <person name="Phan T.H."/>
            <person name="Chen J.H."/>
            <person name="Davidson M.G."/>
            <person name="Lin F."/>
            <person name="Lin J."/>
            <person name="Carleton H.A."/>
            <person name="Mongodin E.F."/>
            <person name="Sensabaugh G.F."/>
            <person name="Perdreau-Remington F."/>
        </authorList>
    </citation>
    <scope>NUCLEOTIDE SEQUENCE [LARGE SCALE GENOMIC DNA]</scope>
    <source>
        <strain>USA300</strain>
    </source>
</reference>
<proteinExistence type="inferred from homology"/>
<organism>
    <name type="scientific">Staphylococcus aureus (strain USA300)</name>
    <dbReference type="NCBI Taxonomy" id="367830"/>
    <lineage>
        <taxon>Bacteria</taxon>
        <taxon>Bacillati</taxon>
        <taxon>Bacillota</taxon>
        <taxon>Bacilli</taxon>
        <taxon>Bacillales</taxon>
        <taxon>Staphylococcaceae</taxon>
        <taxon>Staphylococcus</taxon>
    </lineage>
</organism>
<accession>Q2FFT1</accession>
<dbReference type="EC" id="3.4.21.-"/>
<dbReference type="EMBL" id="CP000255">
    <property type="protein sequence ID" value="ABD21391.1"/>
    <property type="molecule type" value="Genomic_DNA"/>
</dbReference>
<dbReference type="RefSeq" id="WP_001038867.1">
    <property type="nucleotide sequence ID" value="NZ_CP027476.1"/>
</dbReference>
<dbReference type="SMR" id="Q2FFT1"/>
<dbReference type="MEROPS" id="S01.283"/>
<dbReference type="KEGG" id="saa:SAUSA300_1756"/>
<dbReference type="HOGENOM" id="CLU_073589_2_0_9"/>
<dbReference type="OMA" id="DYPGNED"/>
<dbReference type="Proteomes" id="UP000001939">
    <property type="component" value="Chromosome"/>
</dbReference>
<dbReference type="GO" id="GO:0005576">
    <property type="term" value="C:extracellular region"/>
    <property type="evidence" value="ECO:0007669"/>
    <property type="project" value="UniProtKB-SubCell"/>
</dbReference>
<dbReference type="GO" id="GO:0004252">
    <property type="term" value="F:serine-type endopeptidase activity"/>
    <property type="evidence" value="ECO:0007669"/>
    <property type="project" value="InterPro"/>
</dbReference>
<dbReference type="GO" id="GO:0006508">
    <property type="term" value="P:proteolysis"/>
    <property type="evidence" value="ECO:0007669"/>
    <property type="project" value="UniProtKB-KW"/>
</dbReference>
<dbReference type="Gene3D" id="2.40.10.10">
    <property type="entry name" value="Trypsin-like serine proteases"/>
    <property type="match status" value="2"/>
</dbReference>
<dbReference type="InterPro" id="IPR009003">
    <property type="entry name" value="Peptidase_S1_PA"/>
</dbReference>
<dbReference type="InterPro" id="IPR043504">
    <property type="entry name" value="Peptidase_S1_PA_chymotrypsin"/>
</dbReference>
<dbReference type="InterPro" id="IPR008256">
    <property type="entry name" value="Peptidase_S1B"/>
</dbReference>
<dbReference type="InterPro" id="IPR008353">
    <property type="entry name" value="Peptidase_S1B_tx"/>
</dbReference>
<dbReference type="InterPro" id="IPR001254">
    <property type="entry name" value="Trypsin_dom"/>
</dbReference>
<dbReference type="InterPro" id="IPR028301">
    <property type="entry name" value="V8_his_AS"/>
</dbReference>
<dbReference type="PANTHER" id="PTHR43019:SF23">
    <property type="entry name" value="PROTEASE DO-LIKE 5, CHLOROPLASTIC"/>
    <property type="match status" value="1"/>
</dbReference>
<dbReference type="PANTHER" id="PTHR43019">
    <property type="entry name" value="SERINE ENDOPROTEASE DEGS"/>
    <property type="match status" value="1"/>
</dbReference>
<dbReference type="Pfam" id="PF00089">
    <property type="entry name" value="Trypsin"/>
    <property type="match status" value="1"/>
</dbReference>
<dbReference type="PRINTS" id="PR01774">
    <property type="entry name" value="EXFOLTOXIN"/>
</dbReference>
<dbReference type="PRINTS" id="PR00839">
    <property type="entry name" value="V8PROTEASE"/>
</dbReference>
<dbReference type="SUPFAM" id="SSF50494">
    <property type="entry name" value="Trypsin-like serine proteases"/>
    <property type="match status" value="1"/>
</dbReference>
<dbReference type="PROSITE" id="PS00672">
    <property type="entry name" value="V8_HIS"/>
    <property type="match status" value="1"/>
</dbReference>
<name>SPLC_STAA3</name>
<evidence type="ECO:0000250" key="1"/>
<evidence type="ECO:0000305" key="2"/>
<sequence>MNKNIVIKSMAALAILTSVTGINAAVVEETQQIANAEKNVTQVKDTNIFPYNGVVSFKDATGFVIGKNTIITNKHVSKDYKVGDRITAHPNGDKGNGGIYKIKSISDYPGDEDISVMNIEEQAVERGPKGFNFNENVQAFNFAKDAKVDDKIKVIGYPLPAQNSFKQFESTGTIKRIKDNILNFDAYIEPGNSGSPVLNSNNEVIGVVYGGIGKIGSEYNGAVYFTPQIKDFIQKHIEQ</sequence>
<protein>
    <recommendedName>
        <fullName>Serine protease SplC</fullName>
        <ecNumber>3.4.21.-</ecNumber>
    </recommendedName>
</protein>
<feature type="signal peptide" evidence="1">
    <location>
        <begin position="1"/>
        <end position="36"/>
    </location>
</feature>
<feature type="chain" id="PRO_0000359563" description="Serine protease SplC">
    <location>
        <begin position="37"/>
        <end position="239"/>
    </location>
</feature>
<feature type="active site" description="Charge relay system" evidence="1">
    <location>
        <position position="75"/>
    </location>
</feature>
<feature type="active site" description="Charge relay system" evidence="1">
    <location>
        <position position="113"/>
    </location>
</feature>
<feature type="active site" description="Charge relay system" evidence="1">
    <location>
        <position position="193"/>
    </location>
</feature>